<proteinExistence type="evidence at protein level"/>
<organism>
    <name type="scientific">Haemophilus influenzae (strain ATCC 51907 / DSM 11121 / KW20 / Rd)</name>
    <dbReference type="NCBI Taxonomy" id="71421"/>
    <lineage>
        <taxon>Bacteria</taxon>
        <taxon>Pseudomonadati</taxon>
        <taxon>Pseudomonadota</taxon>
        <taxon>Gammaproteobacteria</taxon>
        <taxon>Pasteurellales</taxon>
        <taxon>Pasteurellaceae</taxon>
        <taxon>Haemophilus</taxon>
    </lineage>
</organism>
<feature type="initiator methionine" description="Removed" evidence="3">
    <location>
        <position position="1"/>
    </location>
</feature>
<feature type="chain" id="PRO_0000186541" description="PTS system glucose-specific EIIA component">
    <location>
        <begin position="2"/>
        <end position="166"/>
    </location>
</feature>
<feature type="domain" description="PTS EIIA type-1" evidence="2">
    <location>
        <begin position="36"/>
        <end position="140"/>
    </location>
</feature>
<feature type="active site" description="Tele-phosphohistidine intermediate; for EIIA activity" evidence="1 2">
    <location>
        <position position="88"/>
    </location>
</feature>
<feature type="binding site" evidence="1">
    <location>
        <position position="73"/>
    </location>
    <ligand>
        <name>Zn(2+)</name>
        <dbReference type="ChEBI" id="CHEBI:29105"/>
        <note>ligand shared with glycerol kinase</note>
    </ligand>
</feature>
<feature type="binding site" evidence="1">
    <location>
        <position position="88"/>
    </location>
    <ligand>
        <name>Zn(2+)</name>
        <dbReference type="ChEBI" id="CHEBI:29105"/>
        <note>ligand shared with glycerol kinase</note>
    </ligand>
</feature>
<feature type="site" description="Important for phospho-donor activity" evidence="1">
    <location>
        <position position="73"/>
    </location>
</feature>
<feature type="modified residue" description="Phosphohistidine; by HPr" evidence="1">
    <location>
        <position position="88"/>
    </location>
</feature>
<accession>P45338</accession>
<comment type="function">
    <text evidence="1">The phosphoenolpyruvate-dependent sugar phosphotransferase system (sugar PTS), a major carbohydrate active transport system, catalyzes the phosphorylation of incoming sugar substrates concomitantly with their translocation across the cell membrane. The enzyme II complex composed of PtsG and Crr is involved in glucose transport.</text>
</comment>
<comment type="cofactor">
    <cofactor evidence="1">
        <name>Zn(2+)</name>
        <dbReference type="ChEBI" id="CHEBI:29105"/>
    </cofactor>
    <text evidence="1">Binds 1 zinc ion per glycerol kinase EIIA-Glc dimer. The zinc ion is important for dimerization.</text>
</comment>
<comment type="subunit">
    <text evidence="1">Heterodimer with glycerol kinase (glpk).</text>
</comment>
<comment type="subcellular location">
    <subcellularLocation>
        <location evidence="4">Cytoplasm</location>
    </subcellularLocation>
</comment>
<comment type="domain">
    <text evidence="2">The EIIA domain is phosphorylated by phospho-HPr on a histidyl residue. Then, it transfers the phosphoryl group to the EIIB domain.</text>
</comment>
<protein>
    <recommendedName>
        <fullName evidence="1">PTS system glucose-specific EIIA component</fullName>
    </recommendedName>
    <alternativeName>
        <fullName evidence="1">EIIA-Glc</fullName>
    </alternativeName>
    <alternativeName>
        <fullName evidence="1">EIII-Glc</fullName>
    </alternativeName>
    <alternativeName>
        <fullName evidence="1">Glucose-specific phosphotransferase enzyme IIA component</fullName>
    </alternativeName>
</protein>
<sequence>MGLFDKLFGSKENKSVEVEIYARISGEIVNIEDVPDVVFSEKIVGDGVAVRPIGNKIVAPVDGVIGKIFETNHAFSMESKEGVELFVHFGIDTVELKGEGFTRIAQEGQSVKRGDTVIEFDLALLESKAKSVLTPIVISNMDEISCIVKKSGEVVAGESVVLALKK</sequence>
<dbReference type="EMBL" id="L42023">
    <property type="protein sequence ID" value="AAC23356.1"/>
    <property type="molecule type" value="Genomic_DNA"/>
</dbReference>
<dbReference type="PIR" id="G64137">
    <property type="entry name" value="G64137"/>
</dbReference>
<dbReference type="RefSeq" id="NP_439853.1">
    <property type="nucleotide sequence ID" value="NC_000907.1"/>
</dbReference>
<dbReference type="SMR" id="P45338"/>
<dbReference type="STRING" id="71421.HI_1711"/>
<dbReference type="EnsemblBacteria" id="AAC23356">
    <property type="protein sequence ID" value="AAC23356"/>
    <property type="gene ID" value="HI_1711"/>
</dbReference>
<dbReference type="KEGG" id="hin:HI_1711"/>
<dbReference type="PATRIC" id="fig|71421.8.peg.1790"/>
<dbReference type="eggNOG" id="COG2190">
    <property type="taxonomic scope" value="Bacteria"/>
</dbReference>
<dbReference type="HOGENOM" id="CLU_012312_5_1_6"/>
<dbReference type="OrthoDB" id="7571469at2"/>
<dbReference type="PhylomeDB" id="P45338"/>
<dbReference type="BioCyc" id="HINF71421:G1GJ1-1726-MONOMER"/>
<dbReference type="Proteomes" id="UP000000579">
    <property type="component" value="Chromosome"/>
</dbReference>
<dbReference type="GO" id="GO:0005737">
    <property type="term" value="C:cytoplasm"/>
    <property type="evidence" value="ECO:0007669"/>
    <property type="project" value="UniProtKB-SubCell"/>
</dbReference>
<dbReference type="GO" id="GO:0016301">
    <property type="term" value="F:kinase activity"/>
    <property type="evidence" value="ECO:0000318"/>
    <property type="project" value="GO_Central"/>
</dbReference>
<dbReference type="GO" id="GO:0046872">
    <property type="term" value="F:metal ion binding"/>
    <property type="evidence" value="ECO:0007669"/>
    <property type="project" value="UniProtKB-KW"/>
</dbReference>
<dbReference type="GO" id="GO:0009401">
    <property type="term" value="P:phosphoenolpyruvate-dependent sugar phosphotransferase system"/>
    <property type="evidence" value="ECO:0000318"/>
    <property type="project" value="GO_Central"/>
</dbReference>
<dbReference type="FunFam" id="2.70.70.10:FF:000001">
    <property type="entry name" value="PTS system glucose-specific IIA component"/>
    <property type="match status" value="1"/>
</dbReference>
<dbReference type="Gene3D" id="2.70.70.10">
    <property type="entry name" value="Glucose Permease (Domain IIA)"/>
    <property type="match status" value="1"/>
</dbReference>
<dbReference type="InterPro" id="IPR011055">
    <property type="entry name" value="Dup_hybrid_motif"/>
</dbReference>
<dbReference type="InterPro" id="IPR001127">
    <property type="entry name" value="PTS_EIIA_1_perm"/>
</dbReference>
<dbReference type="InterPro" id="IPR050890">
    <property type="entry name" value="PTS_EIIA_component"/>
</dbReference>
<dbReference type="NCBIfam" id="NF006962">
    <property type="entry name" value="PRK09439.1"/>
    <property type="match status" value="1"/>
</dbReference>
<dbReference type="NCBIfam" id="TIGR00830">
    <property type="entry name" value="PTBA"/>
    <property type="match status" value="1"/>
</dbReference>
<dbReference type="PANTHER" id="PTHR45008">
    <property type="entry name" value="PTS SYSTEM GLUCOSE-SPECIFIC EIIA COMPONENT"/>
    <property type="match status" value="1"/>
</dbReference>
<dbReference type="PANTHER" id="PTHR45008:SF1">
    <property type="entry name" value="PTS SYSTEM GLUCOSE-SPECIFIC EIIA COMPONENT"/>
    <property type="match status" value="1"/>
</dbReference>
<dbReference type="Pfam" id="PF00358">
    <property type="entry name" value="PTS_EIIA_1"/>
    <property type="match status" value="1"/>
</dbReference>
<dbReference type="SUPFAM" id="SSF51261">
    <property type="entry name" value="Duplicated hybrid motif"/>
    <property type="match status" value="1"/>
</dbReference>
<dbReference type="PROSITE" id="PS51093">
    <property type="entry name" value="PTS_EIIA_TYPE_1"/>
    <property type="match status" value="1"/>
</dbReference>
<dbReference type="PROSITE" id="PS00371">
    <property type="entry name" value="PTS_EIIA_TYPE_1_HIS"/>
    <property type="match status" value="1"/>
</dbReference>
<gene>
    <name type="primary">crr</name>
    <name type="ordered locus">HI_1711</name>
</gene>
<evidence type="ECO:0000250" key="1">
    <source>
        <dbReference type="UniProtKB" id="P69783"/>
    </source>
</evidence>
<evidence type="ECO:0000255" key="2">
    <source>
        <dbReference type="PROSITE-ProRule" id="PRU00416"/>
    </source>
</evidence>
<evidence type="ECO:0000269" key="3">
    <source>
    </source>
</evidence>
<evidence type="ECO:0000305" key="4"/>
<reference key="1">
    <citation type="journal article" date="1995" name="Science">
        <title>Whole-genome random sequencing and assembly of Haemophilus influenzae Rd.</title>
        <authorList>
            <person name="Fleischmann R.D."/>
            <person name="Adams M.D."/>
            <person name="White O."/>
            <person name="Clayton R.A."/>
            <person name="Kirkness E.F."/>
            <person name="Kerlavage A.R."/>
            <person name="Bult C.J."/>
            <person name="Tomb J.-F."/>
            <person name="Dougherty B.A."/>
            <person name="Merrick J.M."/>
            <person name="McKenney K."/>
            <person name="Sutton G.G."/>
            <person name="FitzHugh W."/>
            <person name="Fields C.A."/>
            <person name="Gocayne J.D."/>
            <person name="Scott J.D."/>
            <person name="Shirley R."/>
            <person name="Liu L.-I."/>
            <person name="Glodek A."/>
            <person name="Kelley J.M."/>
            <person name="Weidman J.F."/>
            <person name="Phillips C.A."/>
            <person name="Spriggs T."/>
            <person name="Hedblom E."/>
            <person name="Cotton M.D."/>
            <person name="Utterback T.R."/>
            <person name="Hanna M.C."/>
            <person name="Nguyen D.T."/>
            <person name="Saudek D.M."/>
            <person name="Brandon R.C."/>
            <person name="Fine L.D."/>
            <person name="Fritchman J.L."/>
            <person name="Fuhrmann J.L."/>
            <person name="Geoghagen N.S.M."/>
            <person name="Gnehm C.L."/>
            <person name="McDonald L.A."/>
            <person name="Small K.V."/>
            <person name="Fraser C.M."/>
            <person name="Smith H.O."/>
            <person name="Venter J.C."/>
        </authorList>
    </citation>
    <scope>NUCLEOTIDE SEQUENCE [LARGE SCALE GENOMIC DNA]</scope>
    <source>
        <strain>ATCC 51907 / DSM 11121 / KW20 / Rd</strain>
    </source>
</reference>
<reference key="2">
    <citation type="journal article" date="2000" name="Electrophoresis">
        <title>Two-dimensional map of the proteome of Haemophilus influenzae.</title>
        <authorList>
            <person name="Langen H."/>
            <person name="Takacs B."/>
            <person name="Evers S."/>
            <person name="Berndt P."/>
            <person name="Lahm H.W."/>
            <person name="Wipf B."/>
            <person name="Gray C."/>
            <person name="Fountoulakis M."/>
        </authorList>
    </citation>
    <scope>PROTEIN SEQUENCE OF 2-10</scope>
    <source>
        <strain>ATCC 51907 / DSM 11121 / KW20 / Rd</strain>
    </source>
</reference>
<keyword id="KW-0963">Cytoplasm</keyword>
<keyword id="KW-0903">Direct protein sequencing</keyword>
<keyword id="KW-0418">Kinase</keyword>
<keyword id="KW-0479">Metal-binding</keyword>
<keyword id="KW-0597">Phosphoprotein</keyword>
<keyword id="KW-0598">Phosphotransferase system</keyword>
<keyword id="KW-1185">Reference proteome</keyword>
<keyword id="KW-0762">Sugar transport</keyword>
<keyword id="KW-0808">Transferase</keyword>
<keyword id="KW-0813">Transport</keyword>
<keyword id="KW-0862">Zinc</keyword>
<name>PTGA_HAEIN</name>